<keyword id="KW-0175">Coiled coil</keyword>
<keyword id="KW-0963">Cytoplasm</keyword>
<keyword id="KW-0396">Initiation factor</keyword>
<keyword id="KW-0648">Protein biosynthesis</keyword>
<organism>
    <name type="scientific">Aspergillus fumigatus (strain CBS 144.89 / FGSC A1163 / CEA10)</name>
    <name type="common">Neosartorya fumigata</name>
    <dbReference type="NCBI Taxonomy" id="451804"/>
    <lineage>
        <taxon>Eukaryota</taxon>
        <taxon>Fungi</taxon>
        <taxon>Dikarya</taxon>
        <taxon>Ascomycota</taxon>
        <taxon>Pezizomycotina</taxon>
        <taxon>Eurotiomycetes</taxon>
        <taxon>Eurotiomycetidae</taxon>
        <taxon>Eurotiales</taxon>
        <taxon>Aspergillaceae</taxon>
        <taxon>Aspergillus</taxon>
        <taxon>Aspergillus subgen. Fumigati</taxon>
    </lineage>
</organism>
<name>EIF3J_ASPFC</name>
<gene>
    <name type="primary">hcr1</name>
    <name type="ORF">AFUB_072690</name>
</gene>
<accession>B0Y762</accession>
<sequence length="267" mass="29793">MAPSKWDDEEDSSPPPPPPVVARRKFDDEEEEDVLDSWDAAEDSEVEREKAAKAAAAAAKAEAEAAAKKKSKAQRIEERKQERKKLAEANESDEDSEEDEAARRARLRRTEKEGDLKHAQDLFEDIDLNRNRGTPKAIVISDSADPTQAVDLSAMPLFKPTTKDQFTRLTSTLIPLLTAHSKKPHYALWAQEFTKQLVKELNSGDVKKIASALTTISNEKMREERAADKGNKKTKAAKTKVSLVASRDNKIDATPYDDDGLDDDDFM</sequence>
<proteinExistence type="inferred from homology"/>
<protein>
    <recommendedName>
        <fullName evidence="1">Eukaryotic translation initiation factor 3 subunit J</fullName>
        <shortName evidence="1">eIF3j</shortName>
    </recommendedName>
    <alternativeName>
        <fullName>Eukaryotic translation initiation factor 3 30 kDa subunit</fullName>
        <shortName>eIF-3 30 kDa</shortName>
    </alternativeName>
</protein>
<evidence type="ECO:0000255" key="1">
    <source>
        <dbReference type="HAMAP-Rule" id="MF_03009"/>
    </source>
</evidence>
<evidence type="ECO:0000256" key="2">
    <source>
        <dbReference type="SAM" id="MobiDB-lite"/>
    </source>
</evidence>
<feature type="chain" id="PRO_0000365146" description="Eukaryotic translation initiation factor 3 subunit J">
    <location>
        <begin position="1"/>
        <end position="267"/>
    </location>
</feature>
<feature type="region of interest" description="Disordered" evidence="2">
    <location>
        <begin position="1"/>
        <end position="118"/>
    </location>
</feature>
<feature type="region of interest" description="Disordered" evidence="2">
    <location>
        <begin position="221"/>
        <end position="241"/>
    </location>
</feature>
<feature type="coiled-coil region" evidence="1">
    <location>
        <begin position="44"/>
        <end position="99"/>
    </location>
</feature>
<feature type="compositionally biased region" description="Acidic residues" evidence="2">
    <location>
        <begin position="28"/>
        <end position="46"/>
    </location>
</feature>
<feature type="compositionally biased region" description="Basic and acidic residues" evidence="2">
    <location>
        <begin position="74"/>
        <end position="88"/>
    </location>
</feature>
<feature type="compositionally biased region" description="Acidic residues" evidence="2">
    <location>
        <begin position="90"/>
        <end position="100"/>
    </location>
</feature>
<feature type="compositionally biased region" description="Basic and acidic residues" evidence="2">
    <location>
        <begin position="108"/>
        <end position="118"/>
    </location>
</feature>
<feature type="compositionally biased region" description="Basic and acidic residues" evidence="2">
    <location>
        <begin position="221"/>
        <end position="231"/>
    </location>
</feature>
<dbReference type="EMBL" id="DS499599">
    <property type="protein sequence ID" value="EDP49243.1"/>
    <property type="molecule type" value="Genomic_DNA"/>
</dbReference>
<dbReference type="SMR" id="B0Y762"/>
<dbReference type="EnsemblFungi" id="EDP49243">
    <property type="protein sequence ID" value="EDP49243"/>
    <property type="gene ID" value="AFUB_072690"/>
</dbReference>
<dbReference type="VEuPathDB" id="FungiDB:AFUB_072690"/>
<dbReference type="HOGENOM" id="CLU_087988_0_0_1"/>
<dbReference type="OrthoDB" id="129213at5052"/>
<dbReference type="PhylomeDB" id="B0Y762"/>
<dbReference type="Proteomes" id="UP000001699">
    <property type="component" value="Unassembled WGS sequence"/>
</dbReference>
<dbReference type="GO" id="GO:0016282">
    <property type="term" value="C:eukaryotic 43S preinitiation complex"/>
    <property type="evidence" value="ECO:0007669"/>
    <property type="project" value="UniProtKB-UniRule"/>
</dbReference>
<dbReference type="GO" id="GO:0033290">
    <property type="term" value="C:eukaryotic 48S preinitiation complex"/>
    <property type="evidence" value="ECO:0007669"/>
    <property type="project" value="UniProtKB-UniRule"/>
</dbReference>
<dbReference type="GO" id="GO:0005852">
    <property type="term" value="C:eukaryotic translation initiation factor 3 complex"/>
    <property type="evidence" value="ECO:0007669"/>
    <property type="project" value="UniProtKB-UniRule"/>
</dbReference>
<dbReference type="GO" id="GO:0003743">
    <property type="term" value="F:translation initiation factor activity"/>
    <property type="evidence" value="ECO:0007669"/>
    <property type="project" value="UniProtKB-UniRule"/>
</dbReference>
<dbReference type="GO" id="GO:0001732">
    <property type="term" value="P:formation of cytoplasmic translation initiation complex"/>
    <property type="evidence" value="ECO:0007669"/>
    <property type="project" value="UniProtKB-UniRule"/>
</dbReference>
<dbReference type="FunFam" id="1.10.246.60:FF:000003">
    <property type="entry name" value="Eukaryotic translation initiation factor 3 subunit J"/>
    <property type="match status" value="1"/>
</dbReference>
<dbReference type="Gene3D" id="1.10.246.60">
    <property type="entry name" value="Eukaryotic translation initiation factor 3 like domains"/>
    <property type="match status" value="1"/>
</dbReference>
<dbReference type="HAMAP" id="MF_03009">
    <property type="entry name" value="eIF3j"/>
    <property type="match status" value="1"/>
</dbReference>
<dbReference type="InterPro" id="IPR023194">
    <property type="entry name" value="eIF3-like_dom_sf"/>
</dbReference>
<dbReference type="InterPro" id="IPR013906">
    <property type="entry name" value="eIF3j"/>
</dbReference>
<dbReference type="PANTHER" id="PTHR21681">
    <property type="entry name" value="EUKARYOTIC TRANSLATION INITIATION FACTOR 3 SUBUNIT J"/>
    <property type="match status" value="1"/>
</dbReference>
<dbReference type="PANTHER" id="PTHR21681:SF0">
    <property type="entry name" value="EUKARYOTIC TRANSLATION INITIATION FACTOR 3 SUBUNIT J"/>
    <property type="match status" value="1"/>
</dbReference>
<dbReference type="Pfam" id="PF08597">
    <property type="entry name" value="eIF3_subunit"/>
    <property type="match status" value="1"/>
</dbReference>
<comment type="function">
    <text evidence="1">Component of the eukaryotic translation initiation factor 3 (eIF-3) complex, which is involved in protein synthesis of a specialized repertoire of mRNAs and, together with other initiation factors, stimulates binding of mRNA and methionyl-tRNAi to the 40S ribosome. The eIF-3 complex specifically targets and initiates translation of a subset of mRNAs involved in cell proliferation.</text>
</comment>
<comment type="subunit">
    <text evidence="1">Component of the eukaryotic translation initiation factor 3 (eIF-3) complex.</text>
</comment>
<comment type="subcellular location">
    <subcellularLocation>
        <location evidence="1">Cytoplasm</location>
    </subcellularLocation>
</comment>
<comment type="similarity">
    <text evidence="1">Belongs to the eIF-3 subunit J family.</text>
</comment>
<reference key="1">
    <citation type="journal article" date="2008" name="PLoS Genet.">
        <title>Genomic islands in the pathogenic filamentous fungus Aspergillus fumigatus.</title>
        <authorList>
            <person name="Fedorova N.D."/>
            <person name="Khaldi N."/>
            <person name="Joardar V.S."/>
            <person name="Maiti R."/>
            <person name="Amedeo P."/>
            <person name="Anderson M.J."/>
            <person name="Crabtree J."/>
            <person name="Silva J.C."/>
            <person name="Badger J.H."/>
            <person name="Albarraq A."/>
            <person name="Angiuoli S."/>
            <person name="Bussey H."/>
            <person name="Bowyer P."/>
            <person name="Cotty P.J."/>
            <person name="Dyer P.S."/>
            <person name="Egan A."/>
            <person name="Galens K."/>
            <person name="Fraser-Liggett C.M."/>
            <person name="Haas B.J."/>
            <person name="Inman J.M."/>
            <person name="Kent R."/>
            <person name="Lemieux S."/>
            <person name="Malavazi I."/>
            <person name="Orvis J."/>
            <person name="Roemer T."/>
            <person name="Ronning C.M."/>
            <person name="Sundaram J.P."/>
            <person name="Sutton G."/>
            <person name="Turner G."/>
            <person name="Venter J.C."/>
            <person name="White O.R."/>
            <person name="Whitty B.R."/>
            <person name="Youngman P."/>
            <person name="Wolfe K.H."/>
            <person name="Goldman G.H."/>
            <person name="Wortman J.R."/>
            <person name="Jiang B."/>
            <person name="Denning D.W."/>
            <person name="Nierman W.C."/>
        </authorList>
    </citation>
    <scope>NUCLEOTIDE SEQUENCE [LARGE SCALE GENOMIC DNA]</scope>
    <source>
        <strain>CBS 144.89 / FGSC A1163 / CEA10</strain>
    </source>
</reference>